<name>CISY_RICPR</name>
<dbReference type="EC" id="2.3.3.16"/>
<dbReference type="EMBL" id="M17149">
    <property type="protein sequence ID" value="AAA26383.1"/>
    <property type="molecule type" value="Genomic_DNA"/>
</dbReference>
<dbReference type="EMBL" id="AJ235273">
    <property type="protein sequence ID" value="CAA15268.1"/>
    <property type="molecule type" value="Genomic_DNA"/>
</dbReference>
<dbReference type="EMBL" id="U14334">
    <property type="protein sequence ID" value="AAA85524.1"/>
    <property type="molecule type" value="Genomic_DNA"/>
</dbReference>
<dbReference type="EMBL" id="U20244">
    <property type="protein sequence ID" value="AAA85708.1"/>
    <property type="molecule type" value="Genomic_DNA"/>
</dbReference>
<dbReference type="PIR" id="A26971">
    <property type="entry name" value="YKRECP"/>
</dbReference>
<dbReference type="RefSeq" id="NP_221192.1">
    <property type="nucleotide sequence ID" value="NC_000963.1"/>
</dbReference>
<dbReference type="RefSeq" id="WP_004596795.1">
    <property type="nucleotide sequence ID" value="NC_000963.1"/>
</dbReference>
<dbReference type="SMR" id="P09948"/>
<dbReference type="STRING" id="272947.gene:17555913"/>
<dbReference type="EnsemblBacteria" id="CAA15268">
    <property type="protein sequence ID" value="CAA15268"/>
    <property type="gene ID" value="CAA15268"/>
</dbReference>
<dbReference type="KEGG" id="rpr:RP844"/>
<dbReference type="PATRIC" id="fig|272947.5.peg.882"/>
<dbReference type="eggNOG" id="COG0372">
    <property type="taxonomic scope" value="Bacteria"/>
</dbReference>
<dbReference type="HOGENOM" id="CLU_025068_0_0_5"/>
<dbReference type="OrthoDB" id="9800864at2"/>
<dbReference type="UniPathway" id="UPA00223">
    <property type="reaction ID" value="UER00717"/>
</dbReference>
<dbReference type="Proteomes" id="UP000002480">
    <property type="component" value="Chromosome"/>
</dbReference>
<dbReference type="GO" id="GO:0005737">
    <property type="term" value="C:cytoplasm"/>
    <property type="evidence" value="ECO:0007669"/>
    <property type="project" value="InterPro"/>
</dbReference>
<dbReference type="GO" id="GO:0004108">
    <property type="term" value="F:citrate (Si)-synthase activity"/>
    <property type="evidence" value="ECO:0007669"/>
    <property type="project" value="InterPro"/>
</dbReference>
<dbReference type="GO" id="GO:0006099">
    <property type="term" value="P:tricarboxylic acid cycle"/>
    <property type="evidence" value="ECO:0007669"/>
    <property type="project" value="UniProtKB-UniPathway"/>
</dbReference>
<dbReference type="CDD" id="cd06114">
    <property type="entry name" value="EcCS_like"/>
    <property type="match status" value="1"/>
</dbReference>
<dbReference type="FunFam" id="1.10.230.10:FF:000002">
    <property type="entry name" value="Citrate synthase"/>
    <property type="match status" value="1"/>
</dbReference>
<dbReference type="Gene3D" id="2.20.28.60">
    <property type="match status" value="1"/>
</dbReference>
<dbReference type="Gene3D" id="1.10.580.10">
    <property type="entry name" value="Citrate Synthase, domain 1"/>
    <property type="match status" value="1"/>
</dbReference>
<dbReference type="Gene3D" id="1.10.230.10">
    <property type="entry name" value="Cytochrome P450-Terp, domain 2"/>
    <property type="match status" value="1"/>
</dbReference>
<dbReference type="InterPro" id="IPR016142">
    <property type="entry name" value="Citrate_synth-like_lrg_a-sub"/>
</dbReference>
<dbReference type="InterPro" id="IPR016143">
    <property type="entry name" value="Citrate_synth-like_sm_a-sub"/>
</dbReference>
<dbReference type="InterPro" id="IPR002020">
    <property type="entry name" value="Citrate_synthase"/>
</dbReference>
<dbReference type="InterPro" id="IPR019810">
    <property type="entry name" value="Citrate_synthase_AS"/>
</dbReference>
<dbReference type="InterPro" id="IPR024176">
    <property type="entry name" value="Citrate_synthase_bac-typ"/>
</dbReference>
<dbReference type="InterPro" id="IPR036969">
    <property type="entry name" value="Citrate_synthase_sf"/>
</dbReference>
<dbReference type="InterPro" id="IPR010953">
    <property type="entry name" value="Citrate_synthase_typ-I"/>
</dbReference>
<dbReference type="NCBIfam" id="TIGR01798">
    <property type="entry name" value="cit_synth_I"/>
    <property type="match status" value="1"/>
</dbReference>
<dbReference type="NCBIfam" id="NF004126">
    <property type="entry name" value="PRK05614.1"/>
    <property type="match status" value="1"/>
</dbReference>
<dbReference type="PANTHER" id="PTHR42871">
    <property type="entry name" value="CITRATE SYNTHASE"/>
    <property type="match status" value="1"/>
</dbReference>
<dbReference type="PANTHER" id="PTHR42871:SF1">
    <property type="entry name" value="CITRATE SYNTHASE"/>
    <property type="match status" value="1"/>
</dbReference>
<dbReference type="Pfam" id="PF00285">
    <property type="entry name" value="Citrate_synt"/>
    <property type="match status" value="1"/>
</dbReference>
<dbReference type="PIRSF" id="PIRSF001369">
    <property type="entry name" value="Citrate_synth"/>
    <property type="match status" value="1"/>
</dbReference>
<dbReference type="PRINTS" id="PR00143">
    <property type="entry name" value="CITRTSNTHASE"/>
</dbReference>
<dbReference type="SUPFAM" id="SSF48256">
    <property type="entry name" value="Citrate synthase"/>
    <property type="match status" value="1"/>
</dbReference>
<dbReference type="PROSITE" id="PS00480">
    <property type="entry name" value="CITRATE_SYNTHASE"/>
    <property type="match status" value="1"/>
</dbReference>
<reference key="1">
    <citation type="journal article" date="1987" name="J. Bacteriol.">
        <title>Nucleotide sequence of the Rickettsia prowazekii citrate synthase gene.</title>
        <authorList>
            <person name="Wood D.O."/>
            <person name="Williamson L.R."/>
            <person name="Winkler H.H."/>
            <person name="Krause D.C."/>
        </authorList>
    </citation>
    <scope>NUCLEOTIDE SEQUENCE [GENOMIC DNA]</scope>
    <source>
        <strain>Madrid E</strain>
    </source>
</reference>
<reference key="2">
    <citation type="journal article" date="1998" name="Nature">
        <title>The genome sequence of Rickettsia prowazekii and the origin of mitochondria.</title>
        <authorList>
            <person name="Andersson S.G.E."/>
            <person name="Zomorodipour A."/>
            <person name="Andersson J.O."/>
            <person name="Sicheritz-Ponten T."/>
            <person name="Alsmark U.C.M."/>
            <person name="Podowski R.M."/>
            <person name="Naeslund A.K."/>
            <person name="Eriksson A.-S."/>
            <person name="Winkler H.H."/>
            <person name="Kurland C.G."/>
        </authorList>
    </citation>
    <scope>NUCLEOTIDE SEQUENCE [LARGE SCALE GENOMIC DNA]</scope>
    <source>
        <strain>Madrid E</strain>
    </source>
</reference>
<reference key="3">
    <citation type="journal article" date="1995" name="Gene">
        <title>The citrate synthase-encoding gene of Rickettsia prowazekii is controlled by two promoters.</title>
        <authorList>
            <person name="Cai J."/>
            <person name="Pang H."/>
            <person name="Wood D.O."/>
            <person name="Winkler H.H."/>
        </authorList>
    </citation>
    <scope>NUCLEOTIDE SEQUENCE [GENOMIC DNA] OF 1-35</scope>
    <source>
        <strain>Madrid E</strain>
    </source>
</reference>
<reference key="4">
    <citation type="submission" date="1995-01" db="EMBL/GenBank/DDBJ databases">
        <authorList>
            <person name="Balayeva N."/>
            <person name="Eremeeva M."/>
            <person name="Tissot-Dupont H."/>
            <person name="Zakharov I."/>
            <person name="Raoult D."/>
        </authorList>
    </citation>
    <scope>NUCLEOTIDE SEQUENCE [GENOMIC DNA] OF 267-392</scope>
    <source>
        <strain>ATCC VR-142 / Breinl</strain>
    </source>
</reference>
<accession>P09948</accession>
<gene>
    <name type="primary">gltA</name>
    <name type="ordered locus">RP844</name>
</gene>
<organism>
    <name type="scientific">Rickettsia prowazekii (strain Madrid E)</name>
    <dbReference type="NCBI Taxonomy" id="272947"/>
    <lineage>
        <taxon>Bacteria</taxon>
        <taxon>Pseudomonadati</taxon>
        <taxon>Pseudomonadota</taxon>
        <taxon>Alphaproteobacteria</taxon>
        <taxon>Rickettsiales</taxon>
        <taxon>Rickettsiaceae</taxon>
        <taxon>Rickettsieae</taxon>
        <taxon>Rickettsia</taxon>
        <taxon>typhus group</taxon>
    </lineage>
</organism>
<evidence type="ECO:0000255" key="1">
    <source>
        <dbReference type="PROSITE-ProRule" id="PRU10117"/>
    </source>
</evidence>
<evidence type="ECO:0000305" key="2"/>
<feature type="chain" id="PRO_0000169967" description="Citrate synthase">
    <location>
        <begin position="1"/>
        <end position="436"/>
    </location>
</feature>
<feature type="active site" evidence="1">
    <location>
        <position position="311"/>
    </location>
</feature>
<feature type="active site" evidence="1">
    <location>
        <position position="370"/>
    </location>
</feature>
<comment type="catalytic activity">
    <reaction evidence="1">
        <text>oxaloacetate + acetyl-CoA + H2O = citrate + CoA + H(+)</text>
        <dbReference type="Rhea" id="RHEA:16845"/>
        <dbReference type="ChEBI" id="CHEBI:15377"/>
        <dbReference type="ChEBI" id="CHEBI:15378"/>
        <dbReference type="ChEBI" id="CHEBI:16452"/>
        <dbReference type="ChEBI" id="CHEBI:16947"/>
        <dbReference type="ChEBI" id="CHEBI:57287"/>
        <dbReference type="ChEBI" id="CHEBI:57288"/>
        <dbReference type="EC" id="2.3.3.16"/>
    </reaction>
</comment>
<comment type="activity regulation">
    <text>Allosterically inhibited by NADH.</text>
</comment>
<comment type="pathway">
    <text>Carbohydrate metabolism; tricarboxylic acid cycle; isocitrate from oxaloacetate: step 1/2.</text>
</comment>
<comment type="subunit">
    <text>Homohexamer.</text>
</comment>
<comment type="miscellaneous">
    <text>Citrate synthase is found in nearly all cells capable of oxidative metabolism.</text>
</comment>
<comment type="similarity">
    <text evidence="2">Belongs to the citrate synthase family.</text>
</comment>
<protein>
    <recommendedName>
        <fullName>Citrate synthase</fullName>
        <ecNumber>2.3.3.16</ecNumber>
    </recommendedName>
</protein>
<proteinExistence type="inferred from homology"/>
<keyword id="KW-0021">Allosteric enzyme</keyword>
<keyword id="KW-1185">Reference proteome</keyword>
<keyword id="KW-0808">Transferase</keyword>
<keyword id="KW-0816">Tricarboxylic acid cycle</keyword>
<sequence length="436" mass="49324">MTNGNNNNLEFAELKIRGKLFKLPILKASIGKDVIDISRVSAEADYFTYDPGFMSTASCQSTITYIDGDKGILWYRGYDIKDLAEKSDFLEVAYLMIYGELPSSDQYCNFTKKVAHHSLVNERLHYLFQTFCSSSHPMAIMLAAVGSLSAFYPDLLNFNETDYELTAIRMIAKIPTIAAMSYKYSIGQPFIYPDNSLDFTENFLHMMFATPCTKYKVNPIIKNALNKIFILHADHEQNASTSTVRIAGSSGANPFACISTGIASLWGPAHGGANEAVINMLKEIGSSENIPKYVAKAKDKNDPFRLMGFGHRVYKSYDPRAAVLKETCKEVLNELGQLDNNPLLQIAIELEALALKDEYFIERKLYPNVDFYSGIIYKAMGIPSQMFTVLFAIARTVGWMAQWKEMHEDPEQKISRPRQLYTGYVHREYKCIVERK</sequence>